<proteinExistence type="inferred from homology"/>
<reference key="1">
    <citation type="submission" date="2007-11" db="EMBL/GenBank/DDBJ databases">
        <title>The genome sequence of the hyperthermophilic bacterium Thermotoga neapolitana.</title>
        <authorList>
            <person name="Lim S.K."/>
            <person name="Kim J.S."/>
            <person name="Cha S.H."/>
            <person name="Park B.C."/>
            <person name="Lee D.S."/>
            <person name="Tae H.S."/>
            <person name="Kim S.-J."/>
            <person name="Kim J.J."/>
            <person name="Park K.J."/>
            <person name="Lee S.Y."/>
        </authorList>
    </citation>
    <scope>NUCLEOTIDE SEQUENCE [LARGE SCALE GENOMIC DNA]</scope>
    <source>
        <strain>ATCC 49049 / DSM 4359 / NBRC 107923 / NS-E</strain>
    </source>
</reference>
<sequence length="444" mass="50893">MAEFFPEIPKVQFEGKESTNPLAFKFYDPEEIIDGKPLKDHLKFSVAFWHTFVNEGRDPFGDPTADRPWNRYTDPMDKAFARVDALFEFCEKLNIEYFCFHDRDIAPEGKTLRETNKILDKVVERIKERMKDSNVKLLWGTANLFSHPRYMHGAATTCSADVFAYAAAQVKKALEITKELGGEGYVFWGGREGYETLLNTDLGFELENLARFLRMAVDYAKRIGFTGQFLIEPKPKEPTKHQYDFDVATAYAFLKSHGLDEYFKFNIEANHATLAGHTFQHELRMARILGKLGSIDANQGDLLLGWDTDQFPTNVYDTTLAMYEVIKAGGFTKGGLNFDAKVRRASYKVEDLFIGHIAGMDTFALGFKVAYKLVKDGVLDKFIEEKYRSFREGIGRDIVEGKVDFEKLEEYIIDKETIELPSGKQEYLESLINSYIVKTILELR</sequence>
<protein>
    <recommendedName>
        <fullName evidence="1">Xylose isomerase</fullName>
        <ecNumber evidence="1">5.3.1.5</ecNumber>
    </recommendedName>
</protein>
<gene>
    <name evidence="1" type="primary">xylA</name>
    <name type="ordered locus">CTN_0720</name>
</gene>
<feature type="chain" id="PRO_1000200313" description="Xylose isomerase">
    <location>
        <begin position="1"/>
        <end position="444"/>
    </location>
</feature>
<feature type="binding site" evidence="1">
    <location>
        <position position="307"/>
    </location>
    <ligand>
        <name>Mg(2+)</name>
        <dbReference type="ChEBI" id="CHEBI:18420"/>
        <label>2</label>
    </ligand>
</feature>
<feature type="binding site" evidence="1">
    <location>
        <position position="309"/>
    </location>
    <ligand>
        <name>Mg(2+)</name>
        <dbReference type="ChEBI" id="CHEBI:18420"/>
        <label>2</label>
    </ligand>
</feature>
<evidence type="ECO:0000255" key="1">
    <source>
        <dbReference type="HAMAP-Rule" id="MF_00455"/>
    </source>
</evidence>
<accession>B9K7G3</accession>
<keyword id="KW-0119">Carbohydrate metabolism</keyword>
<keyword id="KW-0963">Cytoplasm</keyword>
<keyword id="KW-0413">Isomerase</keyword>
<keyword id="KW-0460">Magnesium</keyword>
<keyword id="KW-0479">Metal-binding</keyword>
<keyword id="KW-0859">Xylose metabolism</keyword>
<organism>
    <name type="scientific">Thermotoga neapolitana (strain ATCC 49049 / DSM 4359 / NBRC 107923 / NS-E)</name>
    <dbReference type="NCBI Taxonomy" id="309803"/>
    <lineage>
        <taxon>Bacteria</taxon>
        <taxon>Thermotogati</taxon>
        <taxon>Thermotogota</taxon>
        <taxon>Thermotogae</taxon>
        <taxon>Thermotogales</taxon>
        <taxon>Thermotogaceae</taxon>
        <taxon>Thermotoga</taxon>
    </lineage>
</organism>
<name>XYLA_THENN</name>
<comment type="catalytic activity">
    <reaction evidence="1">
        <text>alpha-D-xylose = alpha-D-xylulofuranose</text>
        <dbReference type="Rhea" id="RHEA:22816"/>
        <dbReference type="ChEBI" id="CHEBI:28518"/>
        <dbReference type="ChEBI" id="CHEBI:188998"/>
        <dbReference type="EC" id="5.3.1.5"/>
    </reaction>
</comment>
<comment type="cofactor">
    <cofactor evidence="1">
        <name>Mg(2+)</name>
        <dbReference type="ChEBI" id="CHEBI:18420"/>
    </cofactor>
    <text evidence="1">Binds 2 magnesium ions per subunit.</text>
</comment>
<comment type="subunit">
    <text evidence="1">Homotetramer.</text>
</comment>
<comment type="subcellular location">
    <subcellularLocation>
        <location evidence="1">Cytoplasm</location>
    </subcellularLocation>
</comment>
<comment type="similarity">
    <text evidence="1">Belongs to the xylose isomerase family.</text>
</comment>
<dbReference type="EC" id="5.3.1.5" evidence="1"/>
<dbReference type="EMBL" id="CP000916">
    <property type="protein sequence ID" value="ACM22896.1"/>
    <property type="molecule type" value="Genomic_DNA"/>
</dbReference>
<dbReference type="RefSeq" id="WP_015919215.1">
    <property type="nucleotide sequence ID" value="NC_011978.1"/>
</dbReference>
<dbReference type="SMR" id="B9K7G3"/>
<dbReference type="STRING" id="309803.CTN_0720"/>
<dbReference type="KEGG" id="tna:CTN_0720"/>
<dbReference type="eggNOG" id="COG2115">
    <property type="taxonomic scope" value="Bacteria"/>
</dbReference>
<dbReference type="HOGENOM" id="CLU_037261_1_0_0"/>
<dbReference type="Proteomes" id="UP000000445">
    <property type="component" value="Chromosome"/>
</dbReference>
<dbReference type="GO" id="GO:0005737">
    <property type="term" value="C:cytoplasm"/>
    <property type="evidence" value="ECO:0007669"/>
    <property type="project" value="UniProtKB-SubCell"/>
</dbReference>
<dbReference type="GO" id="GO:0000287">
    <property type="term" value="F:magnesium ion binding"/>
    <property type="evidence" value="ECO:0007669"/>
    <property type="project" value="UniProtKB-UniRule"/>
</dbReference>
<dbReference type="GO" id="GO:0009045">
    <property type="term" value="F:xylose isomerase activity"/>
    <property type="evidence" value="ECO:0007669"/>
    <property type="project" value="UniProtKB-UniRule"/>
</dbReference>
<dbReference type="GO" id="GO:0042732">
    <property type="term" value="P:D-xylose metabolic process"/>
    <property type="evidence" value="ECO:0007669"/>
    <property type="project" value="UniProtKB-UniRule"/>
</dbReference>
<dbReference type="FunFam" id="3.20.20.150:FF:000002">
    <property type="entry name" value="Xylose isomerase"/>
    <property type="match status" value="1"/>
</dbReference>
<dbReference type="Gene3D" id="3.20.20.150">
    <property type="entry name" value="Divalent-metal-dependent TIM barrel enzymes"/>
    <property type="match status" value="1"/>
</dbReference>
<dbReference type="HAMAP" id="MF_00455">
    <property type="entry name" value="Xylose_isom_A"/>
    <property type="match status" value="1"/>
</dbReference>
<dbReference type="InterPro" id="IPR036237">
    <property type="entry name" value="Xyl_isomerase-like_sf"/>
</dbReference>
<dbReference type="InterPro" id="IPR013022">
    <property type="entry name" value="Xyl_isomerase-like_TIM-brl"/>
</dbReference>
<dbReference type="InterPro" id="IPR013452">
    <property type="entry name" value="Xylose_isom_bac"/>
</dbReference>
<dbReference type="InterPro" id="IPR001998">
    <property type="entry name" value="Xylose_isomerase"/>
</dbReference>
<dbReference type="NCBIfam" id="NF003998">
    <property type="entry name" value="PRK05474.1"/>
    <property type="match status" value="1"/>
</dbReference>
<dbReference type="NCBIfam" id="TIGR02630">
    <property type="entry name" value="xylose_isom_A"/>
    <property type="match status" value="1"/>
</dbReference>
<dbReference type="PANTHER" id="PTHR48408">
    <property type="match status" value="1"/>
</dbReference>
<dbReference type="PANTHER" id="PTHR48408:SF1">
    <property type="entry name" value="XYLOSE ISOMERASE"/>
    <property type="match status" value="1"/>
</dbReference>
<dbReference type="Pfam" id="PF01261">
    <property type="entry name" value="AP_endonuc_2"/>
    <property type="match status" value="1"/>
</dbReference>
<dbReference type="PRINTS" id="PR00688">
    <property type="entry name" value="XYLOSISMRASE"/>
</dbReference>
<dbReference type="SUPFAM" id="SSF51658">
    <property type="entry name" value="Xylose isomerase-like"/>
    <property type="match status" value="1"/>
</dbReference>
<dbReference type="PROSITE" id="PS51415">
    <property type="entry name" value="XYLOSE_ISOMERASE"/>
    <property type="match status" value="1"/>
</dbReference>